<feature type="chain" id="PRO_0000327488" description="FACT complex subunit SSRP1">
    <location>
        <begin position="1"/>
        <end position="527"/>
    </location>
</feature>
<feature type="region of interest" description="Disordered" evidence="2">
    <location>
        <begin position="179"/>
        <end position="213"/>
    </location>
</feature>
<feature type="region of interest" description="Disordered" evidence="2">
    <location>
        <begin position="479"/>
        <end position="527"/>
    </location>
</feature>
<feature type="compositionally biased region" description="Basic and acidic residues" evidence="2">
    <location>
        <begin position="183"/>
        <end position="198"/>
    </location>
</feature>
<feature type="compositionally biased region" description="Acidic residues" evidence="2">
    <location>
        <begin position="199"/>
        <end position="213"/>
    </location>
</feature>
<feature type="compositionally biased region" description="Acidic residues" evidence="2">
    <location>
        <begin position="483"/>
        <end position="516"/>
    </location>
</feature>
<proteinExistence type="inferred from homology"/>
<name>SSRP1_DICDI</name>
<reference key="1">
    <citation type="journal article" date="2005" name="Nature">
        <title>The genome of the social amoeba Dictyostelium discoideum.</title>
        <authorList>
            <person name="Eichinger L."/>
            <person name="Pachebat J.A."/>
            <person name="Gloeckner G."/>
            <person name="Rajandream M.A."/>
            <person name="Sucgang R."/>
            <person name="Berriman M."/>
            <person name="Song J."/>
            <person name="Olsen R."/>
            <person name="Szafranski K."/>
            <person name="Xu Q."/>
            <person name="Tunggal B."/>
            <person name="Kummerfeld S."/>
            <person name="Madera M."/>
            <person name="Konfortov B.A."/>
            <person name="Rivero F."/>
            <person name="Bankier A.T."/>
            <person name="Lehmann R."/>
            <person name="Hamlin N."/>
            <person name="Davies R."/>
            <person name="Gaudet P."/>
            <person name="Fey P."/>
            <person name="Pilcher K."/>
            <person name="Chen G."/>
            <person name="Saunders D."/>
            <person name="Sodergren E.J."/>
            <person name="Davis P."/>
            <person name="Kerhornou A."/>
            <person name="Nie X."/>
            <person name="Hall N."/>
            <person name="Anjard C."/>
            <person name="Hemphill L."/>
            <person name="Bason N."/>
            <person name="Farbrother P."/>
            <person name="Desany B."/>
            <person name="Just E."/>
            <person name="Morio T."/>
            <person name="Rost R."/>
            <person name="Churcher C.M."/>
            <person name="Cooper J."/>
            <person name="Haydock S."/>
            <person name="van Driessche N."/>
            <person name="Cronin A."/>
            <person name="Goodhead I."/>
            <person name="Muzny D.M."/>
            <person name="Mourier T."/>
            <person name="Pain A."/>
            <person name="Lu M."/>
            <person name="Harper D."/>
            <person name="Lindsay R."/>
            <person name="Hauser H."/>
            <person name="James K.D."/>
            <person name="Quiles M."/>
            <person name="Madan Babu M."/>
            <person name="Saito T."/>
            <person name="Buchrieser C."/>
            <person name="Wardroper A."/>
            <person name="Felder M."/>
            <person name="Thangavelu M."/>
            <person name="Johnson D."/>
            <person name="Knights A."/>
            <person name="Loulseged H."/>
            <person name="Mungall K.L."/>
            <person name="Oliver K."/>
            <person name="Price C."/>
            <person name="Quail M.A."/>
            <person name="Urushihara H."/>
            <person name="Hernandez J."/>
            <person name="Rabbinowitsch E."/>
            <person name="Steffen D."/>
            <person name="Sanders M."/>
            <person name="Ma J."/>
            <person name="Kohara Y."/>
            <person name="Sharp S."/>
            <person name="Simmonds M.N."/>
            <person name="Spiegler S."/>
            <person name="Tivey A."/>
            <person name="Sugano S."/>
            <person name="White B."/>
            <person name="Walker D."/>
            <person name="Woodward J.R."/>
            <person name="Winckler T."/>
            <person name="Tanaka Y."/>
            <person name="Shaulsky G."/>
            <person name="Schleicher M."/>
            <person name="Weinstock G.M."/>
            <person name="Rosenthal A."/>
            <person name="Cox E.C."/>
            <person name="Chisholm R.L."/>
            <person name="Gibbs R.A."/>
            <person name="Loomis W.F."/>
            <person name="Platzer M."/>
            <person name="Kay R.R."/>
            <person name="Williams J.G."/>
            <person name="Dear P.H."/>
            <person name="Noegel A.A."/>
            <person name="Barrell B.G."/>
            <person name="Kuspa A."/>
        </authorList>
    </citation>
    <scope>NUCLEOTIDE SEQUENCE [LARGE SCALE GENOMIC DNA]</scope>
    <source>
        <strain>AX4</strain>
    </source>
</reference>
<gene>
    <name type="primary">ssrp1</name>
    <name type="synonym">ssrp</name>
    <name type="ORF">DDB_G0290331</name>
</gene>
<evidence type="ECO:0000250" key="1"/>
<evidence type="ECO:0000256" key="2">
    <source>
        <dbReference type="SAM" id="MobiDB-lite"/>
    </source>
</evidence>
<evidence type="ECO:0000305" key="3"/>
<keyword id="KW-0158">Chromosome</keyword>
<keyword id="KW-0227">DNA damage</keyword>
<keyword id="KW-0234">DNA repair</keyword>
<keyword id="KW-0235">DNA replication</keyword>
<keyword id="KW-0539">Nucleus</keyword>
<keyword id="KW-1185">Reference proteome</keyword>
<keyword id="KW-0804">Transcription</keyword>
<keyword id="KW-0805">Transcription regulation</keyword>
<sequence>MSSSSNPVSQFNNISLGGRISGTRGILKFTTNNITWKSENGKIETVSSSDIKRANWARVTPRIFQLILSIKGGATVKFDGFKEQDYEVVRKYLSDQYNVSPLEIIELSSKGCNWGEVKVNGPMIQFTTDHGKVGFEFPISEVSQSVIGANNKNELTLEFHHDKAMDDDDETMVEMRFFTPIRPSKEGEEGGKEKKVGEDGEEDEEDEEDAEKEEEISALEQFQQTIMNKSDMVSNVGKSLVVFSAIQFLTPRGRIDIEMYPTFLKLHGKTHDYKVPYESISRLFQFFRPDQKHIFFIISLDPPIRQGQTKYAHLVIQFQAEENIHLELNLTDELQQKFKDQLSPIMNGNANALICKILKALTGKKITIPGNFQSDSGANSIKCSLKANEGYLYPLERCFFFVHKPPTYIKFEDISNIEFARYGAPSVRGGSNRTFDLSINLKNSTSIQFVNIQREEYPSLFNFLKEKKLSILNPVTTGPAMIIDDDDSDDDDYEPSESGSESDEGSASDESEEESEEDKKAKKKQKK</sequence>
<accession>Q54G78</accession>
<comment type="function">
    <text evidence="1">Component of the FACT complex, a general chromatin factor that acts to reorganize nucleosomes. The FACT complex is involved in multiple processes that require DNA as a template such as mRNA elongation, DNA replication and DNA repair. During transcription elongation the FACT complex acts as a histone chaperone that both destabilizes and restores nucleosomal structure. It facilitates the passage of RNA polymerase II and transcription by promoting the dissociation of one histone H2A-H2B dimer from the nucleosome, then subsequently promotes the reestablishment of the nucleosome following the passage of RNA polymerase II (By similarity).</text>
</comment>
<comment type="subunit">
    <text evidence="1">Forms a stable heterodimer with spt16. The spt16-ssrp1 dimer associates with a HMG box DNA-binding domain protein, probably nhp6, to form the FACT complex (By similarity).</text>
</comment>
<comment type="subcellular location">
    <subcellularLocation>
        <location evidence="1">Nucleus</location>
    </subcellularLocation>
    <subcellularLocation>
        <location evidence="1">Chromosome</location>
    </subcellularLocation>
</comment>
<comment type="similarity">
    <text evidence="3">Belongs to the SSRP1 family.</text>
</comment>
<protein>
    <recommendedName>
        <fullName>FACT complex subunit SSRP1</fullName>
    </recommendedName>
    <alternativeName>
        <fullName>Facilitates chromatin transcription complex subunit SSRP1</fullName>
    </alternativeName>
    <alternativeName>
        <fullName>Structure-specific recognition protein</fullName>
    </alternativeName>
</protein>
<dbReference type="EMBL" id="AAFI02000162">
    <property type="protein sequence ID" value="EAL62292.1"/>
    <property type="molecule type" value="Genomic_DNA"/>
</dbReference>
<dbReference type="RefSeq" id="XP_635805.1">
    <property type="nucleotide sequence ID" value="XM_630713.1"/>
</dbReference>
<dbReference type="SMR" id="Q54G78"/>
<dbReference type="FunCoup" id="Q54G78">
    <property type="interactions" value="949"/>
</dbReference>
<dbReference type="STRING" id="44689.Q54G78"/>
<dbReference type="GlyGen" id="Q54G78">
    <property type="glycosylation" value="1 site"/>
</dbReference>
<dbReference type="PaxDb" id="44689-DDB0216434"/>
<dbReference type="EnsemblProtists" id="EAL62292">
    <property type="protein sequence ID" value="EAL62292"/>
    <property type="gene ID" value="DDB_G0290331"/>
</dbReference>
<dbReference type="GeneID" id="8627610"/>
<dbReference type="KEGG" id="ddi:DDB_G0290331"/>
<dbReference type="dictyBase" id="DDB_G0290331">
    <property type="gene designation" value="ssrp1"/>
</dbReference>
<dbReference type="VEuPathDB" id="AmoebaDB:DDB_G0290331"/>
<dbReference type="eggNOG" id="KOG0526">
    <property type="taxonomic scope" value="Eukaryota"/>
</dbReference>
<dbReference type="HOGENOM" id="CLU_017374_3_0_1"/>
<dbReference type="InParanoid" id="Q54G78"/>
<dbReference type="OMA" id="QVVTKIF"/>
<dbReference type="PhylomeDB" id="Q54G78"/>
<dbReference type="Reactome" id="R-DDI-674695">
    <property type="pathway name" value="RNA Polymerase II Pre-transcription Events"/>
</dbReference>
<dbReference type="Reactome" id="R-DDI-6796648">
    <property type="pathway name" value="TP53 Regulates Transcription of DNA Repair Genes"/>
</dbReference>
<dbReference type="Reactome" id="R-DDI-6804756">
    <property type="pathway name" value="Regulation of TP53 Activity through Phosphorylation"/>
</dbReference>
<dbReference type="PRO" id="PR:Q54G78"/>
<dbReference type="Proteomes" id="UP000002195">
    <property type="component" value="Chromosome 5"/>
</dbReference>
<dbReference type="GO" id="GO:0035101">
    <property type="term" value="C:FACT complex"/>
    <property type="evidence" value="ECO:0000250"/>
    <property type="project" value="dictyBase"/>
</dbReference>
<dbReference type="GO" id="GO:0003677">
    <property type="term" value="F:DNA binding"/>
    <property type="evidence" value="ECO:0007669"/>
    <property type="project" value="InterPro"/>
</dbReference>
<dbReference type="GO" id="GO:0042393">
    <property type="term" value="F:histone binding"/>
    <property type="evidence" value="ECO:0000314"/>
    <property type="project" value="dictyBase"/>
</dbReference>
<dbReference type="GO" id="GO:0042802">
    <property type="term" value="F:identical protein binding"/>
    <property type="evidence" value="ECO:0000353"/>
    <property type="project" value="dictyBase"/>
</dbReference>
<dbReference type="GO" id="GO:0031491">
    <property type="term" value="F:nucleosome binding"/>
    <property type="evidence" value="ECO:0000318"/>
    <property type="project" value="GO_Central"/>
</dbReference>
<dbReference type="GO" id="GO:0006281">
    <property type="term" value="P:DNA repair"/>
    <property type="evidence" value="ECO:0007669"/>
    <property type="project" value="UniProtKB-KW"/>
</dbReference>
<dbReference type="GO" id="GO:0006260">
    <property type="term" value="P:DNA replication"/>
    <property type="evidence" value="ECO:0007669"/>
    <property type="project" value="UniProtKB-KW"/>
</dbReference>
<dbReference type="GO" id="GO:1902275">
    <property type="term" value="P:regulation of chromatin organization"/>
    <property type="evidence" value="ECO:0000250"/>
    <property type="project" value="dictyBase"/>
</dbReference>
<dbReference type="CDD" id="cd13230">
    <property type="entry name" value="PH1_SSRP1-like"/>
    <property type="match status" value="1"/>
</dbReference>
<dbReference type="CDD" id="cd13231">
    <property type="entry name" value="PH2_SSRP1-like"/>
    <property type="match status" value="1"/>
</dbReference>
<dbReference type="FunFam" id="2.30.29.220:FF:000004">
    <property type="entry name" value="FACT complex subunit SSRP1"/>
    <property type="match status" value="1"/>
</dbReference>
<dbReference type="FunFam" id="2.30.29.30:FF:000119">
    <property type="entry name" value="FACT complex subunit SSRP1"/>
    <property type="match status" value="1"/>
</dbReference>
<dbReference type="FunFam" id="2.30.29.150:FF:000001">
    <property type="entry name" value="Fact complex subunit ssrp1"/>
    <property type="match status" value="1"/>
</dbReference>
<dbReference type="FunFam" id="2.30.29.30:FF:000098">
    <property type="entry name" value="Fact complex subunit ssrp1"/>
    <property type="match status" value="1"/>
</dbReference>
<dbReference type="Gene3D" id="2.30.29.150">
    <property type="match status" value="1"/>
</dbReference>
<dbReference type="Gene3D" id="2.30.29.30">
    <property type="entry name" value="Pleckstrin-homology domain (PH domain)/Phosphotyrosine-binding domain (PTB)"/>
    <property type="match status" value="2"/>
</dbReference>
<dbReference type="Gene3D" id="2.30.29.220">
    <property type="entry name" value="Structure-specific recognition protein (SSRP1)"/>
    <property type="match status" value="1"/>
</dbReference>
<dbReference type="InterPro" id="IPR011993">
    <property type="entry name" value="PH-like_dom_sf"/>
</dbReference>
<dbReference type="InterPro" id="IPR013719">
    <property type="entry name" value="RTT106/SPT16-like_middle_dom"/>
</dbReference>
<dbReference type="InterPro" id="IPR050454">
    <property type="entry name" value="RTT106/SSRP1_HistChap/FACT"/>
</dbReference>
<dbReference type="InterPro" id="IPR048993">
    <property type="entry name" value="SSRP1-like_PH1"/>
</dbReference>
<dbReference type="InterPro" id="IPR000969">
    <property type="entry name" value="SSRP1/POB3"/>
</dbReference>
<dbReference type="InterPro" id="IPR035417">
    <property type="entry name" value="SSRP1/POB3_N"/>
</dbReference>
<dbReference type="InterPro" id="IPR024954">
    <property type="entry name" value="SSRP1_DD"/>
</dbReference>
<dbReference type="InterPro" id="IPR038167">
    <property type="entry name" value="SSRP1_sf"/>
</dbReference>
<dbReference type="PANTHER" id="PTHR45849">
    <property type="entry name" value="FACT COMPLEX SUBUNIT SSRP1"/>
    <property type="match status" value="1"/>
</dbReference>
<dbReference type="PANTHER" id="PTHR45849:SF1">
    <property type="entry name" value="FACT COMPLEX SUBUNIT SSRP1"/>
    <property type="match status" value="1"/>
</dbReference>
<dbReference type="Pfam" id="PF21103">
    <property type="entry name" value="PH1_SSRP1-like"/>
    <property type="match status" value="1"/>
</dbReference>
<dbReference type="Pfam" id="PF17292">
    <property type="entry name" value="POB3_N"/>
    <property type="match status" value="1"/>
</dbReference>
<dbReference type="Pfam" id="PF08512">
    <property type="entry name" value="Rttp106-like_middle"/>
    <property type="match status" value="1"/>
</dbReference>
<dbReference type="Pfam" id="PF03531">
    <property type="entry name" value="SSrecog"/>
    <property type="match status" value="1"/>
</dbReference>
<dbReference type="PRINTS" id="PR00887">
    <property type="entry name" value="SSRCOGNITION"/>
</dbReference>
<dbReference type="SMART" id="SM01287">
    <property type="entry name" value="Rtt106"/>
    <property type="match status" value="1"/>
</dbReference>
<dbReference type="SUPFAM" id="SSF50729">
    <property type="entry name" value="PH domain-like"/>
    <property type="match status" value="1"/>
</dbReference>
<organism>
    <name type="scientific">Dictyostelium discoideum</name>
    <name type="common">Social amoeba</name>
    <dbReference type="NCBI Taxonomy" id="44689"/>
    <lineage>
        <taxon>Eukaryota</taxon>
        <taxon>Amoebozoa</taxon>
        <taxon>Evosea</taxon>
        <taxon>Eumycetozoa</taxon>
        <taxon>Dictyostelia</taxon>
        <taxon>Dictyosteliales</taxon>
        <taxon>Dictyosteliaceae</taxon>
        <taxon>Dictyostelium</taxon>
    </lineage>
</organism>